<proteinExistence type="inferred from homology"/>
<gene>
    <name evidence="1" type="primary">hemE</name>
    <name type="ordered locus">CFF8240_1456</name>
</gene>
<keyword id="KW-0963">Cytoplasm</keyword>
<keyword id="KW-0210">Decarboxylase</keyword>
<keyword id="KW-0456">Lyase</keyword>
<keyword id="KW-0627">Porphyrin biosynthesis</keyword>
<feature type="chain" id="PRO_1000023889" description="Uroporphyrinogen decarboxylase">
    <location>
        <begin position="1"/>
        <end position="343"/>
    </location>
</feature>
<feature type="binding site" evidence="1">
    <location>
        <begin position="21"/>
        <end position="25"/>
    </location>
    <ligand>
        <name>substrate</name>
    </ligand>
</feature>
<feature type="binding site" evidence="1">
    <location>
        <position position="71"/>
    </location>
    <ligand>
        <name>substrate</name>
    </ligand>
</feature>
<feature type="binding site" evidence="1">
    <location>
        <position position="148"/>
    </location>
    <ligand>
        <name>substrate</name>
    </ligand>
</feature>
<feature type="binding site" evidence="1">
    <location>
        <position position="203"/>
    </location>
    <ligand>
        <name>substrate</name>
    </ligand>
</feature>
<feature type="binding site" evidence="1">
    <location>
        <position position="316"/>
    </location>
    <ligand>
        <name>substrate</name>
    </ligand>
</feature>
<feature type="site" description="Transition state stabilizer" evidence="1">
    <location>
        <position position="71"/>
    </location>
</feature>
<organism>
    <name type="scientific">Campylobacter fetus subsp. fetus (strain 82-40)</name>
    <dbReference type="NCBI Taxonomy" id="360106"/>
    <lineage>
        <taxon>Bacteria</taxon>
        <taxon>Pseudomonadati</taxon>
        <taxon>Campylobacterota</taxon>
        <taxon>Epsilonproteobacteria</taxon>
        <taxon>Campylobacterales</taxon>
        <taxon>Campylobacteraceae</taxon>
        <taxon>Campylobacter</taxon>
    </lineage>
</organism>
<accession>A0RQV9</accession>
<reference key="1">
    <citation type="submission" date="2006-11" db="EMBL/GenBank/DDBJ databases">
        <title>Sequence of Campylobacter fetus subsp. fetus 82-40.</title>
        <authorList>
            <person name="Fouts D.E."/>
            <person name="Nelson K.E."/>
        </authorList>
    </citation>
    <scope>NUCLEOTIDE SEQUENCE [LARGE SCALE GENOMIC DNA]</scope>
    <source>
        <strain>82-40</strain>
    </source>
</reference>
<dbReference type="EC" id="4.1.1.37" evidence="1"/>
<dbReference type="EMBL" id="CP000487">
    <property type="protein sequence ID" value="ABK82820.1"/>
    <property type="molecule type" value="Genomic_DNA"/>
</dbReference>
<dbReference type="RefSeq" id="WP_002850419.1">
    <property type="nucleotide sequence ID" value="NC_008599.1"/>
</dbReference>
<dbReference type="SMR" id="A0RQV9"/>
<dbReference type="GeneID" id="61065274"/>
<dbReference type="KEGG" id="cff:CFF8240_1456"/>
<dbReference type="eggNOG" id="COG0407">
    <property type="taxonomic scope" value="Bacteria"/>
</dbReference>
<dbReference type="HOGENOM" id="CLU_040933_0_0_7"/>
<dbReference type="UniPathway" id="UPA00251">
    <property type="reaction ID" value="UER00321"/>
</dbReference>
<dbReference type="Proteomes" id="UP000000760">
    <property type="component" value="Chromosome"/>
</dbReference>
<dbReference type="GO" id="GO:0005829">
    <property type="term" value="C:cytosol"/>
    <property type="evidence" value="ECO:0007669"/>
    <property type="project" value="TreeGrafter"/>
</dbReference>
<dbReference type="GO" id="GO:0004853">
    <property type="term" value="F:uroporphyrinogen decarboxylase activity"/>
    <property type="evidence" value="ECO:0007669"/>
    <property type="project" value="UniProtKB-UniRule"/>
</dbReference>
<dbReference type="GO" id="GO:0019353">
    <property type="term" value="P:protoporphyrinogen IX biosynthetic process from glutamate"/>
    <property type="evidence" value="ECO:0007669"/>
    <property type="project" value="TreeGrafter"/>
</dbReference>
<dbReference type="CDD" id="cd00717">
    <property type="entry name" value="URO-D"/>
    <property type="match status" value="1"/>
</dbReference>
<dbReference type="FunFam" id="3.20.20.210:FF:000007">
    <property type="entry name" value="Uroporphyrinogen decarboxylase"/>
    <property type="match status" value="1"/>
</dbReference>
<dbReference type="Gene3D" id="3.20.20.210">
    <property type="match status" value="1"/>
</dbReference>
<dbReference type="HAMAP" id="MF_00218">
    <property type="entry name" value="URO_D"/>
    <property type="match status" value="1"/>
</dbReference>
<dbReference type="InterPro" id="IPR038071">
    <property type="entry name" value="UROD/MetE-like_sf"/>
</dbReference>
<dbReference type="InterPro" id="IPR006361">
    <property type="entry name" value="Uroporphyrinogen_deCO2ase_HemE"/>
</dbReference>
<dbReference type="InterPro" id="IPR000257">
    <property type="entry name" value="Uroporphyrinogen_deCOase"/>
</dbReference>
<dbReference type="NCBIfam" id="TIGR01464">
    <property type="entry name" value="hemE"/>
    <property type="match status" value="1"/>
</dbReference>
<dbReference type="PANTHER" id="PTHR21091">
    <property type="entry name" value="METHYLTETRAHYDROFOLATE:HOMOCYSTEINE METHYLTRANSFERASE RELATED"/>
    <property type="match status" value="1"/>
</dbReference>
<dbReference type="PANTHER" id="PTHR21091:SF169">
    <property type="entry name" value="UROPORPHYRINOGEN DECARBOXYLASE"/>
    <property type="match status" value="1"/>
</dbReference>
<dbReference type="Pfam" id="PF01208">
    <property type="entry name" value="URO-D"/>
    <property type="match status" value="1"/>
</dbReference>
<dbReference type="SUPFAM" id="SSF51726">
    <property type="entry name" value="UROD/MetE-like"/>
    <property type="match status" value="1"/>
</dbReference>
<dbReference type="PROSITE" id="PS00906">
    <property type="entry name" value="UROD_1"/>
    <property type="match status" value="1"/>
</dbReference>
<dbReference type="PROSITE" id="PS00907">
    <property type="entry name" value="UROD_2"/>
    <property type="match status" value="1"/>
</dbReference>
<name>DCUP_CAMFF</name>
<comment type="function">
    <text evidence="1">Catalyzes the decarboxylation of four acetate groups of uroporphyrinogen-III to yield coproporphyrinogen-III.</text>
</comment>
<comment type="catalytic activity">
    <reaction evidence="1">
        <text>uroporphyrinogen III + 4 H(+) = coproporphyrinogen III + 4 CO2</text>
        <dbReference type="Rhea" id="RHEA:19865"/>
        <dbReference type="ChEBI" id="CHEBI:15378"/>
        <dbReference type="ChEBI" id="CHEBI:16526"/>
        <dbReference type="ChEBI" id="CHEBI:57308"/>
        <dbReference type="ChEBI" id="CHEBI:57309"/>
        <dbReference type="EC" id="4.1.1.37"/>
    </reaction>
</comment>
<comment type="pathway">
    <text evidence="1">Porphyrin-containing compound metabolism; protoporphyrin-IX biosynthesis; coproporphyrinogen-III from 5-aminolevulinate: step 4/4.</text>
</comment>
<comment type="subunit">
    <text evidence="1">Homodimer.</text>
</comment>
<comment type="subcellular location">
    <subcellularLocation>
        <location evidence="1">Cytoplasm</location>
    </subcellularLocation>
</comment>
<comment type="similarity">
    <text evidence="1">Belongs to the uroporphyrinogen decarboxylase family.</text>
</comment>
<protein>
    <recommendedName>
        <fullName evidence="1">Uroporphyrinogen decarboxylase</fullName>
        <shortName evidence="1">UPD</shortName>
        <shortName evidence="1">URO-D</shortName>
        <ecNumber evidence="1">4.1.1.37</ecNumber>
    </recommendedName>
</protein>
<sequence>MIFIDACFGKPTPYTPIWMMRQAGRYLPEYMAVRDAAGDFLSLCKDYKKASEVTLQPVDILGVDAAIMFSDILVVPLEMGMELKFIKGEGPVFENPILSMDSLDKLSVEKAVKNLSYVYDTIKLTREKLSSDKALIGFCGAPWTIATYMIEGGSTKTYNISKKMLYDNPQFLHAILRKVTNALKLYLEEQIKAGVNAVQIFDSWASALEQNAYLEFGFSYINELVDYIKSQYPDIPVIVFPKGISGFLNKIGGKFDVFGVDWSTPLKMAKETLGSRYVLQGNMEPTRLYSKDAIDDGVDEILSIMRGHRHIFNLGHGILPDVPVENAKYFIKSVQEKSAKYCK</sequence>
<evidence type="ECO:0000255" key="1">
    <source>
        <dbReference type="HAMAP-Rule" id="MF_00218"/>
    </source>
</evidence>